<comment type="function">
    <text evidence="1">Post-translationally modifies flagellin by methylation of epsilon amino group of surface-exposed lysine residues.</text>
</comment>
<comment type="similarity">
    <text evidence="2">Belongs to the FliB family.</text>
</comment>
<keyword id="KW-0489">Methyltransferase</keyword>
<keyword id="KW-0808">Transferase</keyword>
<sequence length="401" mass="45366">MKEITVTEPAFVTHFSCSGSACRDHCCKGWKITLDKTTVKKYLASKDTAIRTIAQDHIILLKKNNSHWGEIKLPSALGNCPYLDEDRLCRVQKTLGAKALSHTCSSFPRAHHTYKNEVRNSLSLACPEVTSRILNDPDAMALSEKTIIQQTFNTAPLFPAQQKLLNLFCLSLINHANSSTEAALYALIKFVMYAQKFAKIDDAALGELEQVYAALLEQLQTGVLAQELMNIAPDSKVKTSLVLQMQDYFRSLPLNRGSVILDHYIQCLLRVLTAEEGVSMEQKVSDIESSLARCLQADEQQKNWAFRNLILYKIWENNFPNQPNVDPLRALYIIVAEYAFIKLLTAASVHERGRLEWDDVTNIVYSFHSRSQHNSEVAKNFHRHIETVRTGDDLSMIHLLT</sequence>
<evidence type="ECO:0000250" key="1"/>
<evidence type="ECO:0000305" key="2"/>
<accession>Q9KJV4</accession>
<accession>Q57N44</accession>
<proteinExistence type="inferred from homology"/>
<name>FLIB_SALCH</name>
<reference key="1">
    <citation type="journal article" date="2000" name="Can. J. Microbiol.">
        <title>The fliU and fliV genes are expressed as a single ORF in Salmonella choleraesuis.</title>
        <authorList>
            <person name="Ho K.C."/>
            <person name="Chang G.N."/>
        </authorList>
    </citation>
    <scope>NUCLEOTIDE SEQUENCE [GENOMIC DNA]</scope>
    <source>
        <strain>CH12440 / Serotype C1</strain>
    </source>
</reference>
<reference key="2">
    <citation type="journal article" date="2005" name="Nucleic Acids Res.">
        <title>The genome sequence of Salmonella enterica serovar Choleraesuis, a highly invasive and resistant zoonotic pathogen.</title>
        <authorList>
            <person name="Chiu C.-H."/>
            <person name="Tang P."/>
            <person name="Chu C."/>
            <person name="Hu S."/>
            <person name="Bao Q."/>
            <person name="Yu J."/>
            <person name="Chou Y.-Y."/>
            <person name="Wang H.-S."/>
            <person name="Lee Y.-S."/>
        </authorList>
    </citation>
    <scope>NUCLEOTIDE SEQUENCE [LARGE SCALE GENOMIC DNA]</scope>
    <source>
        <strain>SC-B67</strain>
    </source>
</reference>
<feature type="chain" id="PRO_0000219866" description="Lysine-N-methylase">
    <location>
        <begin position="1"/>
        <end position="401"/>
    </location>
</feature>
<dbReference type="EC" id="2.1.1.-"/>
<dbReference type="EMBL" id="AF159460">
    <property type="protein sequence ID" value="AAF80753.1"/>
    <property type="molecule type" value="Genomic_DNA"/>
</dbReference>
<dbReference type="EMBL" id="AE017220">
    <property type="protein sequence ID" value="AAX65867.1"/>
    <property type="molecule type" value="Genomic_DNA"/>
</dbReference>
<dbReference type="RefSeq" id="WP_001540275.1">
    <property type="nucleotide sequence ID" value="NC_006905.1"/>
</dbReference>
<dbReference type="KEGG" id="sec:SCH_1961"/>
<dbReference type="HOGENOM" id="CLU_051643_1_1_6"/>
<dbReference type="Proteomes" id="UP000000538">
    <property type="component" value="Chromosome"/>
</dbReference>
<dbReference type="GO" id="GO:0008168">
    <property type="term" value="F:methyltransferase activity"/>
    <property type="evidence" value="ECO:0007669"/>
    <property type="project" value="UniProtKB-KW"/>
</dbReference>
<dbReference type="GO" id="GO:0032259">
    <property type="term" value="P:methylation"/>
    <property type="evidence" value="ECO:0007669"/>
    <property type="project" value="UniProtKB-KW"/>
</dbReference>
<dbReference type="NCBIfam" id="NF038110">
    <property type="entry name" value="Lys_methyl_FliB"/>
    <property type="match status" value="1"/>
</dbReference>
<protein>
    <recommendedName>
        <fullName>Lysine-N-methylase</fullName>
        <ecNumber>2.1.1.-</ecNumber>
    </recommendedName>
    <alternativeName>
        <fullName>Lysine N-methyltransferase</fullName>
    </alternativeName>
</protein>
<gene>
    <name type="primary">fliB</name>
    <name type="synonym">fliU</name>
    <name type="ordered locus">SCH_1961</name>
</gene>
<organism>
    <name type="scientific">Salmonella choleraesuis (strain SC-B67)</name>
    <dbReference type="NCBI Taxonomy" id="321314"/>
    <lineage>
        <taxon>Bacteria</taxon>
        <taxon>Pseudomonadati</taxon>
        <taxon>Pseudomonadota</taxon>
        <taxon>Gammaproteobacteria</taxon>
        <taxon>Enterobacterales</taxon>
        <taxon>Enterobacteriaceae</taxon>
        <taxon>Salmonella</taxon>
    </lineage>
</organism>